<sequence>MNDAIPRPQAKTRKALTPLLEIRNLTKSYDGQHAVDDVSLTIYKGEIFALLGASGCGKSTLLRMLAGFEQPSAGQIMLDGVDLSQVPPYLRPINMMFQSYALFPHMTVEQNIAFGLKQDKLPKAEIASRVNEMLGLVHMQEFAKRKPHQLSGGQRQRVALARSLAKRPKLLLLDEPMGALDKKLRDRMQLEVVDILERVGVTCVMVTHDQEEAMTMAGRIAIMNRGKFVQIGEPEEIYEHPTTRYSAEFIGSVNVFEGVLKERQEDGLVLDSPGLVHPLKVDADASVVDNVPVHVALRPEKIMLCEEPPANGCNFAVGEVIHIAYLGDLSVYHVRLKSGQMISAQLQNAHRHRKGLPTWGDEVRLCWEVDSCVVLTV</sequence>
<proteinExistence type="evidence at protein level"/>
<dbReference type="EC" id="7.6.2.16" evidence="2"/>
<dbReference type="EMBL" id="M93239">
    <property type="protein sequence ID" value="AAA24410.1"/>
    <property type="status" value="ALT_INIT"/>
    <property type="molecule type" value="Genomic_DNA"/>
</dbReference>
<dbReference type="EMBL" id="U00096">
    <property type="protein sequence ID" value="AAC73942.2"/>
    <property type="molecule type" value="Genomic_DNA"/>
</dbReference>
<dbReference type="EMBL" id="AP009048">
    <property type="protein sequence ID" value="BAA35566.2"/>
    <property type="molecule type" value="Genomic_DNA"/>
</dbReference>
<dbReference type="PIR" id="B45313">
    <property type="entry name" value="B45313"/>
</dbReference>
<dbReference type="RefSeq" id="NP_415376.4">
    <property type="nucleotide sequence ID" value="NC_000913.3"/>
</dbReference>
<dbReference type="RefSeq" id="WP_000996005.1">
    <property type="nucleotide sequence ID" value="NZ_SSZK01000002.1"/>
</dbReference>
<dbReference type="SMR" id="P31134"/>
<dbReference type="BioGRID" id="4263504">
    <property type="interactions" value="541"/>
</dbReference>
<dbReference type="BioGRID" id="849850">
    <property type="interactions" value="3"/>
</dbReference>
<dbReference type="ComplexPortal" id="CPX-4384">
    <property type="entry name" value="Putrescine ABC transporter complex"/>
</dbReference>
<dbReference type="DIP" id="DIP-10532N"/>
<dbReference type="FunCoup" id="P31134">
    <property type="interactions" value="365"/>
</dbReference>
<dbReference type="IntAct" id="P31134">
    <property type="interactions" value="4"/>
</dbReference>
<dbReference type="STRING" id="511145.b0855"/>
<dbReference type="TCDB" id="3.A.1.11.2">
    <property type="family name" value="the atp-binding cassette (abc) superfamily"/>
</dbReference>
<dbReference type="PaxDb" id="511145-b0855"/>
<dbReference type="EnsemblBacteria" id="AAC73942">
    <property type="protein sequence ID" value="AAC73942"/>
    <property type="gene ID" value="b0855"/>
</dbReference>
<dbReference type="GeneID" id="945476"/>
<dbReference type="KEGG" id="ecj:JW5818"/>
<dbReference type="KEGG" id="eco:b0855"/>
<dbReference type="KEGG" id="ecoc:C3026_05335"/>
<dbReference type="PATRIC" id="fig|1411691.4.peg.1422"/>
<dbReference type="EchoBASE" id="EB1587"/>
<dbReference type="eggNOG" id="COG3842">
    <property type="taxonomic scope" value="Bacteria"/>
</dbReference>
<dbReference type="HOGENOM" id="CLU_000604_1_1_6"/>
<dbReference type="InParanoid" id="P31134"/>
<dbReference type="OMA" id="DHELAWF"/>
<dbReference type="OrthoDB" id="9802264at2"/>
<dbReference type="PhylomeDB" id="P31134"/>
<dbReference type="BioCyc" id="EcoCyc:POTG-MONOMER"/>
<dbReference type="BioCyc" id="MetaCyc:POTG-MONOMER"/>
<dbReference type="PRO" id="PR:P31134"/>
<dbReference type="Proteomes" id="UP000000625">
    <property type="component" value="Chromosome"/>
</dbReference>
<dbReference type="GO" id="GO:0043190">
    <property type="term" value="C:ATP-binding cassette (ABC) transporter complex"/>
    <property type="evidence" value="ECO:0000304"/>
    <property type="project" value="EcoCyc"/>
</dbReference>
<dbReference type="GO" id="GO:0055052">
    <property type="term" value="C:ATP-binding cassette (ABC) transporter complex, substrate-binding subunit-containing"/>
    <property type="evidence" value="ECO:0000303"/>
    <property type="project" value="ComplexPortal"/>
</dbReference>
<dbReference type="GO" id="GO:0016020">
    <property type="term" value="C:membrane"/>
    <property type="evidence" value="ECO:0000303"/>
    <property type="project" value="ComplexPortal"/>
</dbReference>
<dbReference type="GO" id="GO:0015594">
    <property type="term" value="F:ABC-type putrescine transporter activity"/>
    <property type="evidence" value="ECO:0007669"/>
    <property type="project" value="UniProtKB-EC"/>
</dbReference>
<dbReference type="GO" id="GO:0005524">
    <property type="term" value="F:ATP binding"/>
    <property type="evidence" value="ECO:0007669"/>
    <property type="project" value="UniProtKB-KW"/>
</dbReference>
<dbReference type="GO" id="GO:0016887">
    <property type="term" value="F:ATP hydrolysis activity"/>
    <property type="evidence" value="ECO:0007669"/>
    <property type="project" value="InterPro"/>
</dbReference>
<dbReference type="GO" id="GO:0015847">
    <property type="term" value="P:putrescine transport"/>
    <property type="evidence" value="ECO:0000314"/>
    <property type="project" value="EcoCyc"/>
</dbReference>
<dbReference type="FunFam" id="2.40.50.100:FF:000034">
    <property type="entry name" value="Spermidine/putrescine import ATP-binding protein PotA"/>
    <property type="match status" value="1"/>
</dbReference>
<dbReference type="FunFam" id="3.40.50.300:FF:000133">
    <property type="entry name" value="Spermidine/putrescine import ATP-binding protein PotA"/>
    <property type="match status" value="1"/>
</dbReference>
<dbReference type="Gene3D" id="2.40.50.100">
    <property type="match status" value="1"/>
</dbReference>
<dbReference type="Gene3D" id="3.40.50.300">
    <property type="entry name" value="P-loop containing nucleotide triphosphate hydrolases"/>
    <property type="match status" value="1"/>
</dbReference>
<dbReference type="InterPro" id="IPR003593">
    <property type="entry name" value="AAA+_ATPase"/>
</dbReference>
<dbReference type="InterPro" id="IPR050093">
    <property type="entry name" value="ABC_SmlMolc_Importer"/>
</dbReference>
<dbReference type="InterPro" id="IPR003439">
    <property type="entry name" value="ABC_transporter-like_ATP-bd"/>
</dbReference>
<dbReference type="InterPro" id="IPR017871">
    <property type="entry name" value="ABC_transporter-like_CS"/>
</dbReference>
<dbReference type="InterPro" id="IPR008995">
    <property type="entry name" value="Mo/tungstate-bd_C_term_dom"/>
</dbReference>
<dbReference type="InterPro" id="IPR027417">
    <property type="entry name" value="P-loop_NTPase"/>
</dbReference>
<dbReference type="InterPro" id="IPR005893">
    <property type="entry name" value="PotA-like"/>
</dbReference>
<dbReference type="InterPro" id="IPR013611">
    <property type="entry name" value="Transp-assoc_OB_typ2"/>
</dbReference>
<dbReference type="NCBIfam" id="TIGR01187">
    <property type="entry name" value="potA"/>
    <property type="match status" value="1"/>
</dbReference>
<dbReference type="NCBIfam" id="NF008621">
    <property type="entry name" value="PRK11607.1"/>
    <property type="match status" value="1"/>
</dbReference>
<dbReference type="PANTHER" id="PTHR42781:SF5">
    <property type="entry name" value="PUTRESCINE TRANSPORT ATP-BINDING PROTEIN POTG"/>
    <property type="match status" value="1"/>
</dbReference>
<dbReference type="PANTHER" id="PTHR42781">
    <property type="entry name" value="SPERMIDINE/PUTRESCINE IMPORT ATP-BINDING PROTEIN POTA"/>
    <property type="match status" value="1"/>
</dbReference>
<dbReference type="Pfam" id="PF00005">
    <property type="entry name" value="ABC_tran"/>
    <property type="match status" value="1"/>
</dbReference>
<dbReference type="Pfam" id="PF08402">
    <property type="entry name" value="TOBE_2"/>
    <property type="match status" value="1"/>
</dbReference>
<dbReference type="SMART" id="SM00382">
    <property type="entry name" value="AAA"/>
    <property type="match status" value="1"/>
</dbReference>
<dbReference type="SUPFAM" id="SSF50331">
    <property type="entry name" value="MOP-like"/>
    <property type="match status" value="1"/>
</dbReference>
<dbReference type="SUPFAM" id="SSF52540">
    <property type="entry name" value="P-loop containing nucleoside triphosphate hydrolases"/>
    <property type="match status" value="1"/>
</dbReference>
<dbReference type="PROSITE" id="PS00211">
    <property type="entry name" value="ABC_TRANSPORTER_1"/>
    <property type="match status" value="1"/>
</dbReference>
<dbReference type="PROSITE" id="PS50893">
    <property type="entry name" value="ABC_TRANSPORTER_2"/>
    <property type="match status" value="1"/>
</dbReference>
<evidence type="ECO:0000255" key="1">
    <source>
        <dbReference type="PROSITE-ProRule" id="PRU00434"/>
    </source>
</evidence>
<evidence type="ECO:0000269" key="2">
    <source>
    </source>
</evidence>
<evidence type="ECO:0000269" key="3">
    <source>
    </source>
</evidence>
<evidence type="ECO:0000303" key="4">
    <source>
    </source>
</evidence>
<evidence type="ECO:0000305" key="5"/>
<comment type="function">
    <text evidence="2 3">Part of the ABC transporter complex PotFGHI involved in putrescine uptake (PubMed:23719730, PubMed:8416922). Responsible for energy coupling to the transport system (PubMed:23719730). Imports putrescine for maintenance of the optimal concentration of polyamines necessary for cell growth in the presence of glucose (PubMed:23719730).</text>
</comment>
<comment type="catalytic activity">
    <reaction evidence="2">
        <text>putrescine(out) + ATP + H2O = putrescine(in) + ADP + phosphate + H(+)</text>
        <dbReference type="Rhea" id="RHEA:29995"/>
        <dbReference type="ChEBI" id="CHEBI:15377"/>
        <dbReference type="ChEBI" id="CHEBI:15378"/>
        <dbReference type="ChEBI" id="CHEBI:30616"/>
        <dbReference type="ChEBI" id="CHEBI:43474"/>
        <dbReference type="ChEBI" id="CHEBI:326268"/>
        <dbReference type="ChEBI" id="CHEBI:456216"/>
        <dbReference type="EC" id="7.6.2.16"/>
    </reaction>
</comment>
<comment type="activity regulation">
    <text evidence="2">Transport is feedback inhibited by intracellular polyamines.</text>
</comment>
<comment type="biophysicochemical properties">
    <kinetics>
        <KM evidence="2">0.57 uM for putrescine</KM>
        <Vmax evidence="2">23.0 nmol/min/mg enzyme</Vmax>
    </kinetics>
</comment>
<comment type="subunit">
    <text evidence="2 3">The complex is composed of two ATP-binding proteins (PotG), two transmembrane proteins (PotH and PotI) and a solute-binding protein (PotF).</text>
</comment>
<comment type="subcellular location">
    <subcellularLocation>
        <location evidence="5">Cell inner membrane</location>
        <topology evidence="5">Peripheral membrane protein</topology>
    </subcellularLocation>
</comment>
<comment type="similarity">
    <text evidence="5">Belongs to the ABC transporter superfamily.</text>
</comment>
<comment type="sequence caution" evidence="5">
    <conflict type="erroneous initiation">
        <sequence resource="EMBL-CDS" id="AAA24410"/>
    </conflict>
    <text>Extended N-terminus.</text>
</comment>
<name>POTG_ECOLI</name>
<protein>
    <recommendedName>
        <fullName evidence="5">Putrescine transport ATP-binding protein PotG</fullName>
        <ecNumber evidence="2">7.6.2.16</ecNumber>
    </recommendedName>
</protein>
<organism>
    <name type="scientific">Escherichia coli (strain K12)</name>
    <dbReference type="NCBI Taxonomy" id="83333"/>
    <lineage>
        <taxon>Bacteria</taxon>
        <taxon>Pseudomonadati</taxon>
        <taxon>Pseudomonadota</taxon>
        <taxon>Gammaproteobacteria</taxon>
        <taxon>Enterobacterales</taxon>
        <taxon>Enterobacteriaceae</taxon>
        <taxon>Escherichia</taxon>
    </lineage>
</organism>
<gene>
    <name evidence="4" type="primary">potG</name>
    <name type="ordered locus">b0855</name>
    <name type="ordered locus">JW5818</name>
</gene>
<feature type="chain" id="PRO_0000092760" description="Putrescine transport ATP-binding protein PotG">
    <location>
        <begin position="1"/>
        <end position="377"/>
    </location>
</feature>
<feature type="domain" description="ABC transporter" evidence="1">
    <location>
        <begin position="20"/>
        <end position="250"/>
    </location>
</feature>
<feature type="binding site" evidence="1">
    <location>
        <begin position="52"/>
        <end position="59"/>
    </location>
    <ligand>
        <name>ATP</name>
        <dbReference type="ChEBI" id="CHEBI:30616"/>
    </ligand>
</feature>
<accession>P31134</accession>
<reference key="1">
    <citation type="journal article" date="1993" name="J. Biol. Chem.">
        <title>Characteristics of the operon for a putrescine transport system that maps at 19 minutes on the Escherichia coli chromosome.</title>
        <authorList>
            <person name="Pistocchi R."/>
            <person name="Kashiwagi K."/>
            <person name="Miyamoto S."/>
            <person name="Nukui E."/>
            <person name="Sadakata Y."/>
            <person name="Kobayashi H."/>
            <person name="Igarashi K."/>
        </authorList>
    </citation>
    <scope>NUCLEOTIDE SEQUENCE [GENOMIC DNA]</scope>
    <scope>FUNCTION</scope>
    <scope>SUBUNIT</scope>
</reference>
<reference key="2">
    <citation type="journal article" date="1996" name="DNA Res.">
        <title>A 718-kb DNA sequence of the Escherichia coli K-12 genome corresponding to the 12.7-28.0 min region on the linkage map.</title>
        <authorList>
            <person name="Oshima T."/>
            <person name="Aiba H."/>
            <person name="Baba T."/>
            <person name="Fujita K."/>
            <person name="Hayashi K."/>
            <person name="Honjo A."/>
            <person name="Ikemoto K."/>
            <person name="Inada T."/>
            <person name="Itoh T."/>
            <person name="Kajihara M."/>
            <person name="Kanai K."/>
            <person name="Kashimoto K."/>
            <person name="Kimura S."/>
            <person name="Kitagawa M."/>
            <person name="Makino K."/>
            <person name="Masuda S."/>
            <person name="Miki T."/>
            <person name="Mizobuchi K."/>
            <person name="Mori H."/>
            <person name="Motomura K."/>
            <person name="Nakamura Y."/>
            <person name="Nashimoto H."/>
            <person name="Nishio Y."/>
            <person name="Saito N."/>
            <person name="Sampei G."/>
            <person name="Seki Y."/>
            <person name="Tagami H."/>
            <person name="Takemoto K."/>
            <person name="Wada C."/>
            <person name="Yamamoto Y."/>
            <person name="Yano M."/>
            <person name="Horiuchi T."/>
        </authorList>
    </citation>
    <scope>NUCLEOTIDE SEQUENCE [LARGE SCALE GENOMIC DNA]</scope>
    <source>
        <strain>K12 / W3110 / ATCC 27325 / DSM 5911</strain>
    </source>
</reference>
<reference key="3">
    <citation type="journal article" date="1997" name="Science">
        <title>The complete genome sequence of Escherichia coli K-12.</title>
        <authorList>
            <person name="Blattner F.R."/>
            <person name="Plunkett G. III"/>
            <person name="Bloch C.A."/>
            <person name="Perna N.T."/>
            <person name="Burland V."/>
            <person name="Riley M."/>
            <person name="Collado-Vides J."/>
            <person name="Glasner J.D."/>
            <person name="Rode C.K."/>
            <person name="Mayhew G.F."/>
            <person name="Gregor J."/>
            <person name="Davis N.W."/>
            <person name="Kirkpatrick H.A."/>
            <person name="Goeden M.A."/>
            <person name="Rose D.J."/>
            <person name="Mau B."/>
            <person name="Shao Y."/>
        </authorList>
    </citation>
    <scope>NUCLEOTIDE SEQUENCE [LARGE SCALE GENOMIC DNA]</scope>
    <source>
        <strain>K12 / MG1655 / ATCC 47076</strain>
    </source>
</reference>
<reference key="4">
    <citation type="journal article" date="2006" name="Mol. Syst. Biol.">
        <title>Highly accurate genome sequences of Escherichia coli K-12 strains MG1655 and W3110.</title>
        <authorList>
            <person name="Hayashi K."/>
            <person name="Morooka N."/>
            <person name="Yamamoto Y."/>
            <person name="Fujita K."/>
            <person name="Isono K."/>
            <person name="Choi S."/>
            <person name="Ohtsubo E."/>
            <person name="Baba T."/>
            <person name="Wanner B.L."/>
            <person name="Mori H."/>
            <person name="Horiuchi T."/>
        </authorList>
    </citation>
    <scope>NUCLEOTIDE SEQUENCE [LARGE SCALE GENOMIC DNA]</scope>
    <source>
        <strain>K12 / W3110 / ATCC 27325 / DSM 5911</strain>
    </source>
</reference>
<reference key="5">
    <citation type="journal article" date="2014" name="Amino Acids">
        <title>Properties of putrescine uptake by PotFGHI and PuuP and their physiological significance in Escherichia coli.</title>
        <authorList>
            <person name="Terui Y."/>
            <person name="Saroj S.D."/>
            <person name="Sakamoto A."/>
            <person name="Yoshida T."/>
            <person name="Higashi K."/>
            <person name="Kurihara S."/>
            <person name="Suzuki H."/>
            <person name="Toida T."/>
            <person name="Kashiwagi K."/>
            <person name="Igarashi K."/>
        </authorList>
    </citation>
    <scope>FUNCTION</scope>
    <scope>CATALYTIC ACTIVITY</scope>
    <scope>ACTIVITY REGULATION</scope>
    <scope>BIOPHYSICOCHEMICAL PROPERTIES</scope>
    <scope>SUBUNIT</scope>
</reference>
<keyword id="KW-0067">ATP-binding</keyword>
<keyword id="KW-0997">Cell inner membrane</keyword>
<keyword id="KW-1003">Cell membrane</keyword>
<keyword id="KW-0472">Membrane</keyword>
<keyword id="KW-0547">Nucleotide-binding</keyword>
<keyword id="KW-1185">Reference proteome</keyword>
<keyword id="KW-1278">Translocase</keyword>
<keyword id="KW-0813">Transport</keyword>